<accession>Q21N99</accession>
<gene>
    <name type="ordered locus">Sde_0566</name>
</gene>
<reference key="1">
    <citation type="journal article" date="2008" name="PLoS Genet.">
        <title>Complete genome sequence of the complex carbohydrate-degrading marine bacterium, Saccharophagus degradans strain 2-40 T.</title>
        <authorList>
            <person name="Weiner R.M."/>
            <person name="Taylor L.E. II"/>
            <person name="Henrissat B."/>
            <person name="Hauser L."/>
            <person name="Land M."/>
            <person name="Coutinho P.M."/>
            <person name="Rancurel C."/>
            <person name="Saunders E.H."/>
            <person name="Longmire A.G."/>
            <person name="Zhang H."/>
            <person name="Bayer E.A."/>
            <person name="Gilbert H.J."/>
            <person name="Larimer F."/>
            <person name="Zhulin I.B."/>
            <person name="Ekborg N.A."/>
            <person name="Lamed R."/>
            <person name="Richardson P.M."/>
            <person name="Borovok I."/>
            <person name="Hutcheson S."/>
        </authorList>
    </citation>
    <scope>NUCLEOTIDE SEQUENCE [LARGE SCALE GENOMIC DNA]</scope>
    <source>
        <strain>2-40 / ATCC 43961 / DSM 17024</strain>
    </source>
</reference>
<evidence type="ECO:0000255" key="1">
    <source>
        <dbReference type="HAMAP-Rule" id="MF_01515"/>
    </source>
</evidence>
<keyword id="KW-1003">Cell membrane</keyword>
<keyword id="KW-0472">Membrane</keyword>
<keyword id="KW-1185">Reference proteome</keyword>
<keyword id="KW-0812">Transmembrane</keyword>
<keyword id="KW-1133">Transmembrane helix</keyword>
<sequence>MNEWLNVAPELLALLIFVSRVIDVSLGTFRTIVIFRGYKALAAFIGFFEIMIWLVAAGQVFKNLDQWYLALAYAGGFSMGNYVGMWIENRFAIGNELVRCLSFNRDVLAEKIREQGFKVISFDGDMGTDKLVELLFIVEKRRNVPALIKLIKELDASAVYSVSDVKSVYEGPEPLPRRLFFR</sequence>
<name>Y566_SACD2</name>
<protein>
    <recommendedName>
        <fullName evidence="1">UPF0316 protein Sde_0566</fullName>
    </recommendedName>
</protein>
<dbReference type="EMBL" id="CP000282">
    <property type="protein sequence ID" value="ABD79830.1"/>
    <property type="molecule type" value="Genomic_DNA"/>
</dbReference>
<dbReference type="RefSeq" id="WP_011467051.1">
    <property type="nucleotide sequence ID" value="NC_007912.1"/>
</dbReference>
<dbReference type="SMR" id="Q21N99"/>
<dbReference type="GeneID" id="98612259"/>
<dbReference type="KEGG" id="sde:Sde_0566"/>
<dbReference type="eggNOG" id="COG4843">
    <property type="taxonomic scope" value="Bacteria"/>
</dbReference>
<dbReference type="HOGENOM" id="CLU_106166_0_0_6"/>
<dbReference type="OrthoDB" id="48231at2"/>
<dbReference type="Proteomes" id="UP000001947">
    <property type="component" value="Chromosome"/>
</dbReference>
<dbReference type="GO" id="GO:0005886">
    <property type="term" value="C:plasma membrane"/>
    <property type="evidence" value="ECO:0007669"/>
    <property type="project" value="UniProtKB-SubCell"/>
</dbReference>
<dbReference type="CDD" id="cd16381">
    <property type="entry name" value="YitT_C_like_1"/>
    <property type="match status" value="1"/>
</dbReference>
<dbReference type="HAMAP" id="MF_01515">
    <property type="entry name" value="UPF0316"/>
    <property type="match status" value="1"/>
</dbReference>
<dbReference type="InterPro" id="IPR019264">
    <property type="entry name" value="DUF2179"/>
</dbReference>
<dbReference type="InterPro" id="IPR044035">
    <property type="entry name" value="DUF5698"/>
</dbReference>
<dbReference type="InterPro" id="IPR022930">
    <property type="entry name" value="UPF0316"/>
</dbReference>
<dbReference type="NCBIfam" id="NF003191">
    <property type="entry name" value="PRK04164.1-2"/>
    <property type="match status" value="1"/>
</dbReference>
<dbReference type="PANTHER" id="PTHR40060">
    <property type="entry name" value="UPF0316 PROTEIN YEBE"/>
    <property type="match status" value="1"/>
</dbReference>
<dbReference type="PANTHER" id="PTHR40060:SF1">
    <property type="entry name" value="UPF0316 PROTEIN YEBE"/>
    <property type="match status" value="1"/>
</dbReference>
<dbReference type="Pfam" id="PF10035">
    <property type="entry name" value="DUF2179"/>
    <property type="match status" value="1"/>
</dbReference>
<dbReference type="Pfam" id="PF18955">
    <property type="entry name" value="DUF5698"/>
    <property type="match status" value="1"/>
</dbReference>
<proteinExistence type="inferred from homology"/>
<feature type="chain" id="PRO_0000250349" description="UPF0316 protein Sde_0566">
    <location>
        <begin position="1"/>
        <end position="182"/>
    </location>
</feature>
<feature type="transmembrane region" description="Helical" evidence="1">
    <location>
        <begin position="7"/>
        <end position="27"/>
    </location>
</feature>
<feature type="transmembrane region" description="Helical" evidence="1">
    <location>
        <begin position="41"/>
        <end position="61"/>
    </location>
</feature>
<feature type="transmembrane region" description="Helical" evidence="1">
    <location>
        <begin position="67"/>
        <end position="87"/>
    </location>
</feature>
<comment type="subcellular location">
    <subcellularLocation>
        <location evidence="1">Cell membrane</location>
        <topology evidence="1">Multi-pass membrane protein</topology>
    </subcellularLocation>
</comment>
<comment type="similarity">
    <text evidence="1">Belongs to the UPF0316 family.</text>
</comment>
<organism>
    <name type="scientific">Saccharophagus degradans (strain 2-40 / ATCC 43961 / DSM 17024)</name>
    <dbReference type="NCBI Taxonomy" id="203122"/>
    <lineage>
        <taxon>Bacteria</taxon>
        <taxon>Pseudomonadati</taxon>
        <taxon>Pseudomonadota</taxon>
        <taxon>Gammaproteobacteria</taxon>
        <taxon>Cellvibrionales</taxon>
        <taxon>Cellvibrionaceae</taxon>
        <taxon>Saccharophagus</taxon>
    </lineage>
</organism>